<sequence length="209" mass="22045">MSKTAGVGRLGGARAADAAQQQQLAAGDAAVARAARPIETLLRAAPLVLCVAAMTLMLRDQQSNEYGTVAYSDLGGFKYLVYANGLCAAYSLASAFYTAVPRPATVSRSWVVFLLDQVFTYLILAAGAAAAELLYLAYNGDKEVTWSEACGVFGSFCRQARISVAITFGAVLCFILLSLLSSYRLFSAYEAPPPSALGSKGVEIAAYPR</sequence>
<keyword id="KW-1003">Cell membrane</keyword>
<keyword id="KW-0472">Membrane</keyword>
<keyword id="KW-1185">Reference proteome</keyword>
<keyword id="KW-0812">Transmembrane</keyword>
<keyword id="KW-1133">Transmembrane helix</keyword>
<accession>B6SR79</accession>
<accession>B4FRG5</accession>
<dbReference type="EMBL" id="EU955244">
    <property type="protein sequence ID" value="ACG27362.1"/>
    <property type="molecule type" value="mRNA"/>
</dbReference>
<dbReference type="EMBL" id="BT039703">
    <property type="protein sequence ID" value="ACF84708.1"/>
    <property type="molecule type" value="mRNA"/>
</dbReference>
<dbReference type="RefSeq" id="NP_001140819.1">
    <property type="nucleotide sequence ID" value="NM_001147347.1"/>
</dbReference>
<dbReference type="SMR" id="B6SR79"/>
<dbReference type="FunCoup" id="B6SR79">
    <property type="interactions" value="2152"/>
</dbReference>
<dbReference type="PaxDb" id="4577-GRMZM2G126586_P01"/>
<dbReference type="GeneID" id="100272894"/>
<dbReference type="KEGG" id="zma:100272894"/>
<dbReference type="eggNOG" id="ENOG502S0J7">
    <property type="taxonomic scope" value="Eukaryota"/>
</dbReference>
<dbReference type="InParanoid" id="B6SR79"/>
<dbReference type="OrthoDB" id="749363at2759"/>
<dbReference type="Proteomes" id="UP000007305">
    <property type="component" value="Unplaced"/>
</dbReference>
<dbReference type="ExpressionAtlas" id="B6SR79">
    <property type="expression patterns" value="baseline and differential"/>
</dbReference>
<dbReference type="GO" id="GO:0005886">
    <property type="term" value="C:plasma membrane"/>
    <property type="evidence" value="ECO:0007669"/>
    <property type="project" value="UniProtKB-SubCell"/>
</dbReference>
<dbReference type="InterPro" id="IPR006459">
    <property type="entry name" value="CASP/CASPL"/>
</dbReference>
<dbReference type="InterPro" id="IPR006702">
    <property type="entry name" value="CASP_dom"/>
</dbReference>
<dbReference type="NCBIfam" id="TIGR01569">
    <property type="entry name" value="A_tha_TIGR01569"/>
    <property type="match status" value="1"/>
</dbReference>
<dbReference type="PANTHER" id="PTHR33573:SF46">
    <property type="entry name" value="CASP-LIKE PROTEIN 2A1"/>
    <property type="match status" value="1"/>
</dbReference>
<dbReference type="PANTHER" id="PTHR33573">
    <property type="entry name" value="CASP-LIKE PROTEIN 4A4"/>
    <property type="match status" value="1"/>
</dbReference>
<dbReference type="Pfam" id="PF04535">
    <property type="entry name" value="CASP_dom"/>
    <property type="match status" value="1"/>
</dbReference>
<evidence type="ECO:0000250" key="1"/>
<evidence type="ECO:0000255" key="2"/>
<evidence type="ECO:0000305" key="3"/>
<comment type="subunit">
    <text evidence="1">Homodimer and heterodimers.</text>
</comment>
<comment type="subcellular location">
    <subcellularLocation>
        <location evidence="1">Cell membrane</location>
        <topology evidence="1">Multi-pass membrane protein</topology>
    </subcellularLocation>
</comment>
<comment type="similarity">
    <text evidence="3">Belongs to the Casparian strip membrane proteins (CASP) family.</text>
</comment>
<organism>
    <name type="scientific">Zea mays</name>
    <name type="common">Maize</name>
    <dbReference type="NCBI Taxonomy" id="4577"/>
    <lineage>
        <taxon>Eukaryota</taxon>
        <taxon>Viridiplantae</taxon>
        <taxon>Streptophyta</taxon>
        <taxon>Embryophyta</taxon>
        <taxon>Tracheophyta</taxon>
        <taxon>Spermatophyta</taxon>
        <taxon>Magnoliopsida</taxon>
        <taxon>Liliopsida</taxon>
        <taxon>Poales</taxon>
        <taxon>Poaceae</taxon>
        <taxon>PACMAD clade</taxon>
        <taxon>Panicoideae</taxon>
        <taxon>Andropogonodae</taxon>
        <taxon>Andropogoneae</taxon>
        <taxon>Tripsacinae</taxon>
        <taxon>Zea</taxon>
    </lineage>
</organism>
<feature type="chain" id="PRO_0000370279" description="CASP-like protein 2A2">
    <location>
        <begin position="1"/>
        <end position="209"/>
    </location>
</feature>
<feature type="topological domain" description="Cytoplasmic" evidence="2">
    <location>
        <begin position="1"/>
        <end position="37"/>
    </location>
</feature>
<feature type="transmembrane region" description="Helical" evidence="2">
    <location>
        <begin position="38"/>
        <end position="58"/>
    </location>
</feature>
<feature type="topological domain" description="Extracellular" evidence="2">
    <location>
        <begin position="59"/>
        <end position="79"/>
    </location>
</feature>
<feature type="transmembrane region" description="Helical" evidence="2">
    <location>
        <begin position="80"/>
        <end position="100"/>
    </location>
</feature>
<feature type="topological domain" description="Cytoplasmic" evidence="2">
    <location>
        <begin position="101"/>
        <end position="109"/>
    </location>
</feature>
<feature type="transmembrane region" description="Helical" evidence="2">
    <location>
        <begin position="110"/>
        <end position="130"/>
    </location>
</feature>
<feature type="topological domain" description="Extracellular" evidence="2">
    <location>
        <begin position="131"/>
        <end position="161"/>
    </location>
</feature>
<feature type="transmembrane region" description="Helical" evidence="2">
    <location>
        <begin position="162"/>
        <end position="182"/>
    </location>
</feature>
<feature type="topological domain" description="Cytoplasmic" evidence="2">
    <location>
        <begin position="183"/>
        <end position="209"/>
    </location>
</feature>
<feature type="sequence conflict" description="In Ref. 2; ACF84708." evidence="3" ref="2">
    <original>R</original>
    <variation>G</variation>
    <location>
        <position position="14"/>
    </location>
</feature>
<feature type="sequence conflict" description="In Ref. 2; ACF84708." evidence="3" ref="2">
    <original>I</original>
    <variation>T</variation>
    <location>
        <position position="162"/>
    </location>
</feature>
<name>CSPL7_MAIZE</name>
<proteinExistence type="evidence at transcript level"/>
<reference key="1">
    <citation type="journal article" date="2009" name="Plant Mol. Biol.">
        <title>Insights into corn genes derived from large-scale cDNA sequencing.</title>
        <authorList>
            <person name="Alexandrov N.N."/>
            <person name="Brover V.V."/>
            <person name="Freidin S."/>
            <person name="Troukhan M.E."/>
            <person name="Tatarinova T.V."/>
            <person name="Zhang H."/>
            <person name="Swaller T.J."/>
            <person name="Lu Y.-P."/>
            <person name="Bouck J."/>
            <person name="Flavell R.B."/>
            <person name="Feldmann K.A."/>
        </authorList>
    </citation>
    <scope>NUCLEOTIDE SEQUENCE [LARGE SCALE MRNA]</scope>
</reference>
<reference key="2">
    <citation type="submission" date="2009-01" db="EMBL/GenBank/DDBJ databases">
        <title>Maize full-length cDNA project.</title>
        <authorList>
            <person name="Yu Y."/>
            <person name="Currie J."/>
            <person name="Lomeli R."/>
            <person name="Angelova A."/>
            <person name="Collura K."/>
            <person name="Wissotski M."/>
            <person name="Campos D."/>
            <person name="Kudrna D."/>
            <person name="Golser W."/>
            <person name="Ashely E."/>
            <person name="Haller K."/>
            <person name="Descour A."/>
            <person name="Fernandes J."/>
            <person name="Zuccolo A."/>
            <person name="Soderlund C."/>
            <person name="Walbot V."/>
        </authorList>
    </citation>
    <scope>NUCLEOTIDE SEQUENCE [LARGE SCALE MRNA]</scope>
    <source>
        <strain>cv. B73</strain>
    </source>
</reference>
<reference key="3">
    <citation type="journal article" date="2014" name="Plant Physiol.">
        <title>Functional and evolutionary analysis of the CASPARIAN STRIP MEMBRANE DOMAIN PROTEIN family.</title>
        <authorList>
            <person name="Roppolo D."/>
            <person name="Boeckmann B."/>
            <person name="Pfister A."/>
            <person name="Boutet E."/>
            <person name="Rubio M.C."/>
            <person name="Denervaud-Tendon V."/>
            <person name="Vermeer J.E."/>
            <person name="Gheyselinck J."/>
            <person name="Xenarios I."/>
            <person name="Geldner N."/>
        </authorList>
    </citation>
    <scope>GENE FAMILY</scope>
    <scope>NOMENCLATURE</scope>
</reference>
<protein>
    <recommendedName>
        <fullName>CASP-like protein 2A2</fullName>
        <shortName>ZmCASPL2A2</shortName>
    </recommendedName>
    <alternativeName>
        <fullName>Salicylic acid-induced protein 1-B</fullName>
    </alternativeName>
</protein>